<keyword id="KW-0068">Autocatalytic cleavage</keyword>
<keyword id="KW-0227">DNA damage</keyword>
<keyword id="KW-0234">DNA repair</keyword>
<keyword id="KW-0235">DNA replication</keyword>
<keyword id="KW-0238">DNA-binding</keyword>
<keyword id="KW-0378">Hydrolase</keyword>
<keyword id="KW-0678">Repressor</keyword>
<keyword id="KW-0742">SOS response</keyword>
<keyword id="KW-0804">Transcription</keyword>
<keyword id="KW-0805">Transcription regulation</keyword>
<feature type="chain" id="PRO_1000001329" description="LexA repressor">
    <location>
        <begin position="1"/>
        <end position="228"/>
    </location>
</feature>
<feature type="DNA-binding region" description="H-T-H motif" evidence="1">
    <location>
        <begin position="26"/>
        <end position="46"/>
    </location>
</feature>
<feature type="active site" description="For autocatalytic cleavage activity" evidence="1">
    <location>
        <position position="149"/>
    </location>
</feature>
<feature type="active site" description="For autocatalytic cleavage activity" evidence="1">
    <location>
        <position position="187"/>
    </location>
</feature>
<feature type="site" description="Cleavage; by autolysis" evidence="1">
    <location>
        <begin position="113"/>
        <end position="114"/>
    </location>
</feature>
<protein>
    <recommendedName>
        <fullName evidence="1">LexA repressor</fullName>
        <ecNumber evidence="1">3.4.21.88</ecNumber>
    </recommendedName>
</protein>
<sequence length="228" mass="25250">MLTRKQMELLDFIKTRMDRDGVPPSFDEMKDALDLRSKSGIHRLITALEERGFIRRLAHRARAIEIVKLPEAMERAGFAPRVIEGDRTEPPRGARPVETANALDLPLMGRIAAGLPIEAITDGAQSVTVPSMMLSGRGQHYALEVRGDSMIEAGINDGDIVVIREQQTADNGDIVVALVADHEATLKRFRRRGGMIALEPANASYETQVYPDHMVKVQGRLVGLIRSY</sequence>
<evidence type="ECO:0000255" key="1">
    <source>
        <dbReference type="HAMAP-Rule" id="MF_00015"/>
    </source>
</evidence>
<reference key="1">
    <citation type="submission" date="2007-04" db="EMBL/GenBank/DDBJ databases">
        <title>Complete sequence of chromosome of Rhodobacter sphaeroides ATCC 17025.</title>
        <authorList>
            <consortium name="US DOE Joint Genome Institute"/>
            <person name="Copeland A."/>
            <person name="Lucas S."/>
            <person name="Lapidus A."/>
            <person name="Barry K."/>
            <person name="Detter J.C."/>
            <person name="Glavina del Rio T."/>
            <person name="Hammon N."/>
            <person name="Israni S."/>
            <person name="Dalin E."/>
            <person name="Tice H."/>
            <person name="Pitluck S."/>
            <person name="Chertkov O."/>
            <person name="Brettin T."/>
            <person name="Bruce D."/>
            <person name="Han C."/>
            <person name="Schmutz J."/>
            <person name="Larimer F."/>
            <person name="Land M."/>
            <person name="Hauser L."/>
            <person name="Kyrpides N."/>
            <person name="Kim E."/>
            <person name="Richardson P."/>
            <person name="Mackenzie C."/>
            <person name="Choudhary M."/>
            <person name="Donohue T.J."/>
            <person name="Kaplan S."/>
        </authorList>
    </citation>
    <scope>NUCLEOTIDE SEQUENCE [LARGE SCALE GENOMIC DNA]</scope>
    <source>
        <strain>ATCC 17025 / ATH 2.4.3</strain>
    </source>
</reference>
<proteinExistence type="inferred from homology"/>
<comment type="function">
    <text evidence="1">Represses a number of genes involved in the response to DNA damage (SOS response), including recA and lexA. In the presence of single-stranded DNA, RecA interacts with LexA causing an autocatalytic cleavage which disrupts the DNA-binding part of LexA, leading to derepression of the SOS regulon and eventually DNA repair.</text>
</comment>
<comment type="catalytic activity">
    <reaction evidence="1">
        <text>Hydrolysis of Ala-|-Gly bond in repressor LexA.</text>
        <dbReference type="EC" id="3.4.21.88"/>
    </reaction>
</comment>
<comment type="subunit">
    <text evidence="1">Homodimer.</text>
</comment>
<comment type="similarity">
    <text evidence="1">Belongs to the peptidase S24 family.</text>
</comment>
<gene>
    <name evidence="1" type="primary">lexA</name>
    <name type="ordered locus">Rsph17025_3094</name>
</gene>
<organism>
    <name type="scientific">Cereibacter sphaeroides (strain ATCC 17025 / ATH 2.4.3)</name>
    <name type="common">Rhodobacter sphaeroides</name>
    <dbReference type="NCBI Taxonomy" id="349102"/>
    <lineage>
        <taxon>Bacteria</taxon>
        <taxon>Pseudomonadati</taxon>
        <taxon>Pseudomonadota</taxon>
        <taxon>Alphaproteobacteria</taxon>
        <taxon>Rhodobacterales</taxon>
        <taxon>Paracoccaceae</taxon>
        <taxon>Cereibacter</taxon>
    </lineage>
</organism>
<name>LEXA_CERS5</name>
<dbReference type="EC" id="3.4.21.88" evidence="1"/>
<dbReference type="EMBL" id="CP000661">
    <property type="protein sequence ID" value="ABP71978.1"/>
    <property type="molecule type" value="Genomic_DNA"/>
</dbReference>
<dbReference type="SMR" id="A4WX64"/>
<dbReference type="STRING" id="349102.Rsph17025_3094"/>
<dbReference type="MEROPS" id="S24.001"/>
<dbReference type="KEGG" id="rsq:Rsph17025_3094"/>
<dbReference type="eggNOG" id="COG1974">
    <property type="taxonomic scope" value="Bacteria"/>
</dbReference>
<dbReference type="HOGENOM" id="CLU_066192_45_2_5"/>
<dbReference type="BioCyc" id="RSPH349102:G1G8M-3197-MONOMER"/>
<dbReference type="GO" id="GO:0003677">
    <property type="term" value="F:DNA binding"/>
    <property type="evidence" value="ECO:0007669"/>
    <property type="project" value="UniProtKB-UniRule"/>
</dbReference>
<dbReference type="GO" id="GO:0004252">
    <property type="term" value="F:serine-type endopeptidase activity"/>
    <property type="evidence" value="ECO:0007669"/>
    <property type="project" value="UniProtKB-UniRule"/>
</dbReference>
<dbReference type="GO" id="GO:0006281">
    <property type="term" value="P:DNA repair"/>
    <property type="evidence" value="ECO:0007669"/>
    <property type="project" value="UniProtKB-UniRule"/>
</dbReference>
<dbReference type="GO" id="GO:0006260">
    <property type="term" value="P:DNA replication"/>
    <property type="evidence" value="ECO:0007669"/>
    <property type="project" value="UniProtKB-UniRule"/>
</dbReference>
<dbReference type="GO" id="GO:0045892">
    <property type="term" value="P:negative regulation of DNA-templated transcription"/>
    <property type="evidence" value="ECO:0007669"/>
    <property type="project" value="UniProtKB-UniRule"/>
</dbReference>
<dbReference type="GO" id="GO:0006508">
    <property type="term" value="P:proteolysis"/>
    <property type="evidence" value="ECO:0007669"/>
    <property type="project" value="InterPro"/>
</dbReference>
<dbReference type="GO" id="GO:0009432">
    <property type="term" value="P:SOS response"/>
    <property type="evidence" value="ECO:0007669"/>
    <property type="project" value="UniProtKB-UniRule"/>
</dbReference>
<dbReference type="CDD" id="cd06529">
    <property type="entry name" value="S24_LexA-like"/>
    <property type="match status" value="1"/>
</dbReference>
<dbReference type="FunFam" id="1.10.10.10:FF:000102">
    <property type="entry name" value="LexA repressor"/>
    <property type="match status" value="1"/>
</dbReference>
<dbReference type="FunFam" id="2.10.109.10:FF:000001">
    <property type="entry name" value="LexA repressor"/>
    <property type="match status" value="1"/>
</dbReference>
<dbReference type="Gene3D" id="2.10.109.10">
    <property type="entry name" value="Umud Fragment, subunit A"/>
    <property type="match status" value="1"/>
</dbReference>
<dbReference type="Gene3D" id="1.10.10.10">
    <property type="entry name" value="Winged helix-like DNA-binding domain superfamily/Winged helix DNA-binding domain"/>
    <property type="match status" value="1"/>
</dbReference>
<dbReference type="HAMAP" id="MF_00015">
    <property type="entry name" value="LexA"/>
    <property type="match status" value="1"/>
</dbReference>
<dbReference type="InterPro" id="IPR006200">
    <property type="entry name" value="LexA"/>
</dbReference>
<dbReference type="InterPro" id="IPR039418">
    <property type="entry name" value="LexA-like"/>
</dbReference>
<dbReference type="InterPro" id="IPR036286">
    <property type="entry name" value="LexA/Signal_pep-like_sf"/>
</dbReference>
<dbReference type="InterPro" id="IPR006199">
    <property type="entry name" value="LexA_DNA-bd_dom"/>
</dbReference>
<dbReference type="InterPro" id="IPR050077">
    <property type="entry name" value="LexA_repressor"/>
</dbReference>
<dbReference type="InterPro" id="IPR006197">
    <property type="entry name" value="Peptidase_S24_LexA"/>
</dbReference>
<dbReference type="InterPro" id="IPR015927">
    <property type="entry name" value="Peptidase_S24_S26A/B/C"/>
</dbReference>
<dbReference type="InterPro" id="IPR036388">
    <property type="entry name" value="WH-like_DNA-bd_sf"/>
</dbReference>
<dbReference type="InterPro" id="IPR036390">
    <property type="entry name" value="WH_DNA-bd_sf"/>
</dbReference>
<dbReference type="NCBIfam" id="TIGR00498">
    <property type="entry name" value="lexA"/>
    <property type="match status" value="1"/>
</dbReference>
<dbReference type="PANTHER" id="PTHR33516">
    <property type="entry name" value="LEXA REPRESSOR"/>
    <property type="match status" value="1"/>
</dbReference>
<dbReference type="PANTHER" id="PTHR33516:SF2">
    <property type="entry name" value="LEXA REPRESSOR-RELATED"/>
    <property type="match status" value="1"/>
</dbReference>
<dbReference type="Pfam" id="PF01726">
    <property type="entry name" value="LexA_DNA_bind"/>
    <property type="match status" value="1"/>
</dbReference>
<dbReference type="Pfam" id="PF00717">
    <property type="entry name" value="Peptidase_S24"/>
    <property type="match status" value="1"/>
</dbReference>
<dbReference type="PRINTS" id="PR00726">
    <property type="entry name" value="LEXASERPTASE"/>
</dbReference>
<dbReference type="SUPFAM" id="SSF51306">
    <property type="entry name" value="LexA/Signal peptidase"/>
    <property type="match status" value="1"/>
</dbReference>
<dbReference type="SUPFAM" id="SSF46785">
    <property type="entry name" value="Winged helix' DNA-binding domain"/>
    <property type="match status" value="1"/>
</dbReference>
<accession>A4WX64</accession>